<accession>A0QNJ3</accession>
<comment type="function">
    <text evidence="1 3">Part of the ESX-1 / type VII specialized secretion system (T7SS), which exports several proteins including EsxA and EsxB (Probable). Plays a role in DNA conjugation, in at least a donor strain (PubMed:15314236).</text>
</comment>
<comment type="disruption phenotype">
    <text evidence="1">Increases efficiency of DNA conjugation when disrupted in donor strain (PubMed:15314236).</text>
</comment>
<comment type="miscellaneous">
    <text evidence="4">DNA conjugation in M.smegmatis is unidirectional with distinct donor and recipient strains; mc(2)155 is a donor strain while MKD8 is a recipient strain. Mutations in a donor strain that alter DNA transfer do not always alter DNA transfer in a recipient strain.</text>
</comment>
<comment type="similarity">
    <text evidence="3">Belongs to the mycobacterial PE family.</text>
</comment>
<evidence type="ECO:0000269" key="1">
    <source>
    </source>
</evidence>
<evidence type="ECO:0000303" key="2">
    <source>
    </source>
</evidence>
<evidence type="ECO:0000305" key="3"/>
<evidence type="ECO:0000305" key="4">
    <source>
    </source>
</evidence>
<keyword id="KW-1185">Reference proteome</keyword>
<sequence>MQPMTHNPGAEAVAAQVIANAARGLAGGTTASAAVTALVPAGADEVSALAAVAFASEGVEALAANAFAQEELTRAGAAFAEIAGIYNAVDAANAATM</sequence>
<organism>
    <name type="scientific">Mycolicibacterium smegmatis (strain ATCC 700084 / mc(2)155)</name>
    <name type="common">Mycobacterium smegmatis</name>
    <dbReference type="NCBI Taxonomy" id="246196"/>
    <lineage>
        <taxon>Bacteria</taxon>
        <taxon>Bacillati</taxon>
        <taxon>Actinomycetota</taxon>
        <taxon>Actinomycetes</taxon>
        <taxon>Mycobacteriales</taxon>
        <taxon>Mycobacteriaceae</taxon>
        <taxon>Mycolicibacterium</taxon>
    </lineage>
</organism>
<name>PE35_MYCS2</name>
<gene>
    <name type="primary">PE35</name>
    <name evidence="2" type="synonym">MsPE35</name>
    <name type="ordered locus">MSMEG_0063</name>
    <name type="ordered locus">MSMEI_0064</name>
</gene>
<proteinExistence type="inferred from homology"/>
<dbReference type="EMBL" id="CP000480">
    <property type="protein sequence ID" value="ABK69830.1"/>
    <property type="molecule type" value="Genomic_DNA"/>
</dbReference>
<dbReference type="EMBL" id="CP001663">
    <property type="protein sequence ID" value="AFP36546.1"/>
    <property type="molecule type" value="Genomic_DNA"/>
</dbReference>
<dbReference type="RefSeq" id="WP_003891390.1">
    <property type="nucleotide sequence ID" value="NZ_SIJM01000058.1"/>
</dbReference>
<dbReference type="RefSeq" id="YP_884481.1">
    <property type="nucleotide sequence ID" value="NC_008596.1"/>
</dbReference>
<dbReference type="SMR" id="A0QNJ3"/>
<dbReference type="STRING" id="246196.MSMEG_0063"/>
<dbReference type="PaxDb" id="246196-MSMEI_0064"/>
<dbReference type="KEGG" id="msb:LJ00_00315"/>
<dbReference type="KEGG" id="msg:MSMEI_0064"/>
<dbReference type="KEGG" id="msm:MSMEG_0063"/>
<dbReference type="PATRIC" id="fig|246196.19.peg.61"/>
<dbReference type="eggNOG" id="ENOG5031PX8">
    <property type="taxonomic scope" value="Bacteria"/>
</dbReference>
<dbReference type="OrthoDB" id="4753420at2"/>
<dbReference type="Proteomes" id="UP000000757">
    <property type="component" value="Chromosome"/>
</dbReference>
<dbReference type="Proteomes" id="UP000006158">
    <property type="component" value="Chromosome"/>
</dbReference>
<dbReference type="Gene3D" id="1.10.287.850">
    <property type="entry name" value="HP0062-like domain"/>
    <property type="match status" value="1"/>
</dbReference>
<dbReference type="InterPro" id="IPR000084">
    <property type="entry name" value="PE-PGRS_N"/>
</dbReference>
<dbReference type="Pfam" id="PF00934">
    <property type="entry name" value="PE"/>
    <property type="match status" value="1"/>
</dbReference>
<feature type="chain" id="PRO_0000438348" description="Uncharacterized PE family protein PE35">
    <location>
        <begin position="1"/>
        <end position="97"/>
    </location>
</feature>
<reference key="1">
    <citation type="submission" date="2006-10" db="EMBL/GenBank/DDBJ databases">
        <authorList>
            <person name="Fleischmann R.D."/>
            <person name="Dodson R.J."/>
            <person name="Haft D.H."/>
            <person name="Merkel J.S."/>
            <person name="Nelson W.C."/>
            <person name="Fraser C.M."/>
        </authorList>
    </citation>
    <scope>NUCLEOTIDE SEQUENCE [LARGE SCALE GENOMIC DNA]</scope>
    <source>
        <strain>ATCC 700084 / mc(2)155</strain>
    </source>
</reference>
<reference key="2">
    <citation type="journal article" date="2007" name="Genome Biol.">
        <title>Interrupted coding sequences in Mycobacterium smegmatis: authentic mutations or sequencing errors?</title>
        <authorList>
            <person name="Deshayes C."/>
            <person name="Perrodou E."/>
            <person name="Gallien S."/>
            <person name="Euphrasie D."/>
            <person name="Schaeffer C."/>
            <person name="Van-Dorsselaer A."/>
            <person name="Poch O."/>
            <person name="Lecompte O."/>
            <person name="Reyrat J.-M."/>
        </authorList>
    </citation>
    <scope>NUCLEOTIDE SEQUENCE [LARGE SCALE GENOMIC DNA]</scope>
    <source>
        <strain>ATCC 700084 / mc(2)155</strain>
    </source>
</reference>
<reference key="3">
    <citation type="journal article" date="2009" name="Genome Res.">
        <title>Ortho-proteogenomics: multiple proteomes investigation through orthology and a new MS-based protocol.</title>
        <authorList>
            <person name="Gallien S."/>
            <person name="Perrodou E."/>
            <person name="Carapito C."/>
            <person name="Deshayes C."/>
            <person name="Reyrat J.-M."/>
            <person name="Van Dorsselaer A."/>
            <person name="Poch O."/>
            <person name="Schaeffer C."/>
            <person name="Lecompte O."/>
        </authorList>
    </citation>
    <scope>NUCLEOTIDE SEQUENCE [LARGE SCALE GENOMIC DNA]</scope>
    <source>
        <strain>ATCC 700084 / mc(2)155</strain>
    </source>
</reference>
<reference key="4">
    <citation type="journal article" date="2004" name="Proc. Natl. Acad. Sci. U.S.A.">
        <title>The RD1 virulence locus of Mycobacterium tuberculosis regulates DNA transfer in Mycobacterium smegmatis.</title>
        <authorList>
            <person name="Flint J.L."/>
            <person name="Kowalski J.C."/>
            <person name="Karnati P.K."/>
            <person name="Derbyshire K.M."/>
        </authorList>
    </citation>
    <scope>FUNCTION</scope>
    <scope>DISRUPTION PHENOTYPE</scope>
    <source>
        <strain>ATCC 700084 / mc(2)155</strain>
    </source>
</reference>
<protein>
    <recommendedName>
        <fullName>Uncharacterized PE family protein PE35</fullName>
    </recommendedName>
</protein>